<proteinExistence type="inferred from homology"/>
<keyword id="KW-0030">Aminoacyl-tRNA synthetase</keyword>
<keyword id="KW-0067">ATP-binding</keyword>
<keyword id="KW-0963">Cytoplasm</keyword>
<keyword id="KW-0436">Ligase</keyword>
<keyword id="KW-0479">Metal-binding</keyword>
<keyword id="KW-0547">Nucleotide-binding</keyword>
<keyword id="KW-0648">Protein biosynthesis</keyword>
<keyword id="KW-0862">Zinc</keyword>
<feature type="chain" id="PRO_1000216257" description="Isoleucine--tRNA ligase">
    <location>
        <begin position="1"/>
        <end position="1092"/>
    </location>
</feature>
<feature type="short sequence motif" description="'HIGH' region">
    <location>
        <begin position="53"/>
        <end position="63"/>
    </location>
</feature>
<feature type="short sequence motif" description="'KMSKS' region">
    <location>
        <begin position="613"/>
        <end position="617"/>
    </location>
</feature>
<feature type="binding site" evidence="1">
    <location>
        <position position="616"/>
    </location>
    <ligand>
        <name>ATP</name>
        <dbReference type="ChEBI" id="CHEBI:30616"/>
    </ligand>
</feature>
<sequence>MTNTKYYPEVSSNADFAGLEREILKFWQDNNIFQKSIDDRNGESEFIFYDGPPFANGLPHYGHLLTGFIKDVYARYQTVKGKKVERRFGWDCHGLPAEMQSEKELGISGRLAIANFGIEKFNAHCRASVMKYANDWEEYVTRQARWVDFKNSYKTMDKNFMESVLWAFKELYNKGLLYESMRVMPYSWACETPLSNFETRLDNSYRERADKAVTVSFVLSHPVATTTGSFKEYRILAWTTTPWTLPSNLALAVGSDIDYALVPKNDVCYIIAAYSVSKYAKELGLSGEENFEIIKGSELQGLHYKSLFDYFENHPNSFKIFAGDFVVEGDGTGVVHMAPGFGEDDQILCESKGIELVCPVDNSGKFTKEIPNLEGLQVFDANDKIIIKLKEQGNWLKTEQYIHNYPHCWRTDTPLIYKAVPSWYVKVTQFKDRMVELNQQINWIPFHVKDNLFGKWLENARDWSISRNRFWGTPLPVWKSDDPKYPRIDVYGSIEELEKDFGVKVTDLHRPFIDELTRPNPDDPTGKSTMRRIEDVFDCWFESGSMPYGQAHYPFENKEWFEDHFPADFIVEYSAQTRGWFYTLMVLSTALFDRPPFLNCICHGVILDSTGQKLSKRLNNYADPLELFDKYGSDALRVTMLSSNVVKGQELLIDKDGKMVFDTLRLFIKPIWNAYHFFTMYANADSLKGKLNFSSKNVLDVYILSKLKIAVQKIEESLDNFDTQTAYHAVSEFFEVLNNWYIRRSRARFWKSEKDTDKQNAYNTLYSCLDTMAIAMSALVPMISEAIYKGLRHCEERNDTALSGKSNVIARQDTSLDKAISGVSHKIATALSVPRNDAISVHLCNYPTLSDFEINHELVATMDNVLDICSNSLFIRSTENIRVRQPLASIAIISKHNNNLKDFEDLIKDEINVKAVIYRDDLENYTSKKLSINFPMLGKRLPHKMKEIIVASKKGEWEAITGGLAICGETLNSDEYKLVLEPYSHIKGAASFENNSSLLILDLELTPELIEEGYARDIVRFIQQARKDADFSITDRILIEIISEFNLSKIIDNYGDFIKEQTLGEFAKNFTPDYVSKVELENYQIQLKVKKS</sequence>
<protein>
    <recommendedName>
        <fullName evidence="1">Isoleucine--tRNA ligase</fullName>
        <ecNumber evidence="1">6.1.1.5</ecNumber>
    </recommendedName>
    <alternativeName>
        <fullName evidence="1">Isoleucyl-tRNA synthetase</fullName>
        <shortName evidence="1">IleRS</shortName>
    </alternativeName>
</protein>
<evidence type="ECO:0000255" key="1">
    <source>
        <dbReference type="HAMAP-Rule" id="MF_02003"/>
    </source>
</evidence>
<organism>
    <name type="scientific">Rickettsia peacockii (strain Rustic)</name>
    <dbReference type="NCBI Taxonomy" id="562019"/>
    <lineage>
        <taxon>Bacteria</taxon>
        <taxon>Pseudomonadati</taxon>
        <taxon>Pseudomonadota</taxon>
        <taxon>Alphaproteobacteria</taxon>
        <taxon>Rickettsiales</taxon>
        <taxon>Rickettsiaceae</taxon>
        <taxon>Rickettsieae</taxon>
        <taxon>Rickettsia</taxon>
        <taxon>spotted fever group</taxon>
    </lineage>
</organism>
<reference key="1">
    <citation type="journal article" date="2009" name="PLoS ONE">
        <title>Genome sequence of the endosymbiont Rickettsia peacockii and comparison with virulent Rickettsia rickettsii: identification of virulence factors.</title>
        <authorList>
            <person name="Felsheim R.F."/>
            <person name="Kurtti T.J."/>
            <person name="Munderloh U.G."/>
        </authorList>
    </citation>
    <scope>NUCLEOTIDE SEQUENCE [LARGE SCALE GENOMIC DNA]</scope>
    <source>
        <strain>Rustic</strain>
    </source>
</reference>
<name>SYI_RICPU</name>
<accession>C4K2T0</accession>
<gene>
    <name evidence="1" type="primary">ileS</name>
    <name type="ordered locus">RPR_07180</name>
</gene>
<comment type="function">
    <text evidence="1">Catalyzes the attachment of isoleucine to tRNA(Ile). As IleRS can inadvertently accommodate and process structurally similar amino acids such as valine, to avoid such errors it has two additional distinct tRNA(Ile)-dependent editing activities. One activity is designated as 'pretransfer' editing and involves the hydrolysis of activated Val-AMP. The other activity is designated 'posttransfer' editing and involves deacylation of mischarged Val-tRNA(Ile).</text>
</comment>
<comment type="catalytic activity">
    <reaction evidence="1">
        <text>tRNA(Ile) + L-isoleucine + ATP = L-isoleucyl-tRNA(Ile) + AMP + diphosphate</text>
        <dbReference type="Rhea" id="RHEA:11060"/>
        <dbReference type="Rhea" id="RHEA-COMP:9666"/>
        <dbReference type="Rhea" id="RHEA-COMP:9695"/>
        <dbReference type="ChEBI" id="CHEBI:30616"/>
        <dbReference type="ChEBI" id="CHEBI:33019"/>
        <dbReference type="ChEBI" id="CHEBI:58045"/>
        <dbReference type="ChEBI" id="CHEBI:78442"/>
        <dbReference type="ChEBI" id="CHEBI:78528"/>
        <dbReference type="ChEBI" id="CHEBI:456215"/>
        <dbReference type="EC" id="6.1.1.5"/>
    </reaction>
</comment>
<comment type="cofactor">
    <cofactor evidence="1">
        <name>Zn(2+)</name>
        <dbReference type="ChEBI" id="CHEBI:29105"/>
    </cofactor>
</comment>
<comment type="subunit">
    <text evidence="1">Monomer.</text>
</comment>
<comment type="subcellular location">
    <subcellularLocation>
        <location evidence="1">Cytoplasm</location>
    </subcellularLocation>
</comment>
<comment type="domain">
    <text evidence="1">IleRS has two distinct active sites: one for aminoacylation and one for editing. The misactivated valine is translocated from the active site to the editing site, which sterically excludes the correctly activated isoleucine. The single editing site contains two valyl binding pockets, one specific for each substrate (Val-AMP or Val-tRNA(Ile)).</text>
</comment>
<comment type="similarity">
    <text evidence="1">Belongs to the class-I aminoacyl-tRNA synthetase family. IleS type 2 subfamily.</text>
</comment>
<dbReference type="EC" id="6.1.1.5" evidence="1"/>
<dbReference type="EMBL" id="CP001227">
    <property type="protein sequence ID" value="ACR47875.1"/>
    <property type="molecule type" value="Genomic_DNA"/>
</dbReference>
<dbReference type="RefSeq" id="WP_012737033.1">
    <property type="nucleotide sequence ID" value="NC_012730.1"/>
</dbReference>
<dbReference type="SMR" id="C4K2T0"/>
<dbReference type="KEGG" id="rpk:RPR_07180"/>
<dbReference type="HOGENOM" id="CLU_001493_1_1_5"/>
<dbReference type="Proteomes" id="UP000005015">
    <property type="component" value="Chromosome"/>
</dbReference>
<dbReference type="GO" id="GO:0005737">
    <property type="term" value="C:cytoplasm"/>
    <property type="evidence" value="ECO:0007669"/>
    <property type="project" value="UniProtKB-SubCell"/>
</dbReference>
<dbReference type="GO" id="GO:0002161">
    <property type="term" value="F:aminoacyl-tRNA deacylase activity"/>
    <property type="evidence" value="ECO:0007669"/>
    <property type="project" value="InterPro"/>
</dbReference>
<dbReference type="GO" id="GO:0005524">
    <property type="term" value="F:ATP binding"/>
    <property type="evidence" value="ECO:0007669"/>
    <property type="project" value="UniProtKB-UniRule"/>
</dbReference>
<dbReference type="GO" id="GO:0004822">
    <property type="term" value="F:isoleucine-tRNA ligase activity"/>
    <property type="evidence" value="ECO:0007669"/>
    <property type="project" value="UniProtKB-UniRule"/>
</dbReference>
<dbReference type="GO" id="GO:0000049">
    <property type="term" value="F:tRNA binding"/>
    <property type="evidence" value="ECO:0007669"/>
    <property type="project" value="InterPro"/>
</dbReference>
<dbReference type="GO" id="GO:0008270">
    <property type="term" value="F:zinc ion binding"/>
    <property type="evidence" value="ECO:0007669"/>
    <property type="project" value="UniProtKB-UniRule"/>
</dbReference>
<dbReference type="GO" id="GO:0006428">
    <property type="term" value="P:isoleucyl-tRNA aminoacylation"/>
    <property type="evidence" value="ECO:0007669"/>
    <property type="project" value="UniProtKB-UniRule"/>
</dbReference>
<dbReference type="CDD" id="cd07961">
    <property type="entry name" value="Anticodon_Ia_Ile_ABEc"/>
    <property type="match status" value="1"/>
</dbReference>
<dbReference type="CDD" id="cd00818">
    <property type="entry name" value="IleRS_core"/>
    <property type="match status" value="1"/>
</dbReference>
<dbReference type="FunFam" id="3.40.50.620:FF:000205">
    <property type="entry name" value="Isoleucine--tRNA ligase"/>
    <property type="match status" value="1"/>
</dbReference>
<dbReference type="FunFam" id="3.40.50.620:FF:000241">
    <property type="entry name" value="Isoleucine--tRNA ligase"/>
    <property type="match status" value="1"/>
</dbReference>
<dbReference type="Gene3D" id="3.40.50.620">
    <property type="entry name" value="HUPs"/>
    <property type="match status" value="2"/>
</dbReference>
<dbReference type="Gene3D" id="1.10.730.10">
    <property type="entry name" value="Isoleucyl-tRNA Synthetase, Domain 1"/>
    <property type="match status" value="1"/>
</dbReference>
<dbReference type="HAMAP" id="MF_02003">
    <property type="entry name" value="Ile_tRNA_synth_type2"/>
    <property type="match status" value="1"/>
</dbReference>
<dbReference type="InterPro" id="IPR001412">
    <property type="entry name" value="aa-tRNA-synth_I_CS"/>
</dbReference>
<dbReference type="InterPro" id="IPR002300">
    <property type="entry name" value="aa-tRNA-synth_Ia"/>
</dbReference>
<dbReference type="InterPro" id="IPR033709">
    <property type="entry name" value="Anticodon_Ile_ABEc"/>
</dbReference>
<dbReference type="InterPro" id="IPR002301">
    <property type="entry name" value="Ile-tRNA-ligase"/>
</dbReference>
<dbReference type="InterPro" id="IPR023586">
    <property type="entry name" value="Ile-tRNA-ligase_type2"/>
</dbReference>
<dbReference type="InterPro" id="IPR013155">
    <property type="entry name" value="M/V/L/I-tRNA-synth_anticd-bd"/>
</dbReference>
<dbReference type="InterPro" id="IPR014729">
    <property type="entry name" value="Rossmann-like_a/b/a_fold"/>
</dbReference>
<dbReference type="InterPro" id="IPR009080">
    <property type="entry name" value="tRNAsynth_Ia_anticodon-bd"/>
</dbReference>
<dbReference type="InterPro" id="IPR009008">
    <property type="entry name" value="Val/Leu/Ile-tRNA-synth_edit"/>
</dbReference>
<dbReference type="NCBIfam" id="TIGR00392">
    <property type="entry name" value="ileS"/>
    <property type="match status" value="1"/>
</dbReference>
<dbReference type="PANTHER" id="PTHR42780:SF1">
    <property type="entry name" value="ISOLEUCINE--TRNA LIGASE, CYTOPLASMIC"/>
    <property type="match status" value="1"/>
</dbReference>
<dbReference type="PANTHER" id="PTHR42780">
    <property type="entry name" value="SOLEUCYL-TRNA SYNTHETASE"/>
    <property type="match status" value="1"/>
</dbReference>
<dbReference type="Pfam" id="PF08264">
    <property type="entry name" value="Anticodon_1"/>
    <property type="match status" value="1"/>
</dbReference>
<dbReference type="Pfam" id="PF19302">
    <property type="entry name" value="DUF5915"/>
    <property type="match status" value="1"/>
</dbReference>
<dbReference type="Pfam" id="PF00133">
    <property type="entry name" value="tRNA-synt_1"/>
    <property type="match status" value="1"/>
</dbReference>
<dbReference type="PRINTS" id="PR00984">
    <property type="entry name" value="TRNASYNTHILE"/>
</dbReference>
<dbReference type="SUPFAM" id="SSF47323">
    <property type="entry name" value="Anticodon-binding domain of a subclass of class I aminoacyl-tRNA synthetases"/>
    <property type="match status" value="1"/>
</dbReference>
<dbReference type="SUPFAM" id="SSF52374">
    <property type="entry name" value="Nucleotidylyl transferase"/>
    <property type="match status" value="1"/>
</dbReference>
<dbReference type="SUPFAM" id="SSF50677">
    <property type="entry name" value="ValRS/IleRS/LeuRS editing domain"/>
    <property type="match status" value="1"/>
</dbReference>
<dbReference type="PROSITE" id="PS00178">
    <property type="entry name" value="AA_TRNA_LIGASE_I"/>
    <property type="match status" value="1"/>
</dbReference>